<gene>
    <name evidence="1" type="primary">rbcL</name>
</gene>
<keyword id="KW-0113">Calvin cycle</keyword>
<keyword id="KW-0120">Carbon dioxide fixation</keyword>
<keyword id="KW-0150">Chloroplast</keyword>
<keyword id="KW-1015">Disulfide bond</keyword>
<keyword id="KW-0456">Lyase</keyword>
<keyword id="KW-0460">Magnesium</keyword>
<keyword id="KW-0479">Metal-binding</keyword>
<keyword id="KW-0488">Methylation</keyword>
<keyword id="KW-0503">Monooxygenase</keyword>
<keyword id="KW-0560">Oxidoreductase</keyword>
<keyword id="KW-0601">Photorespiration</keyword>
<keyword id="KW-0602">Photosynthesis</keyword>
<keyword id="KW-0934">Plastid</keyword>
<feature type="chain" id="PRO_0000062532" description="Ribulose bisphosphate carboxylase large chain">
    <location>
        <begin position="1" status="less than"/>
        <end position="459" status="greater than"/>
    </location>
</feature>
<feature type="active site" description="Proton acceptor" evidence="1">
    <location>
        <position position="165"/>
    </location>
</feature>
<feature type="active site" description="Proton acceptor" evidence="1">
    <location>
        <position position="284"/>
    </location>
</feature>
<feature type="binding site" description="in homodimeric partner" evidence="1">
    <location>
        <position position="113"/>
    </location>
    <ligand>
        <name>substrate</name>
    </ligand>
</feature>
<feature type="binding site" evidence="1">
    <location>
        <position position="163"/>
    </location>
    <ligand>
        <name>substrate</name>
    </ligand>
</feature>
<feature type="binding site" evidence="1">
    <location>
        <position position="167"/>
    </location>
    <ligand>
        <name>substrate</name>
    </ligand>
</feature>
<feature type="binding site" description="via carbamate group" evidence="1">
    <location>
        <position position="191"/>
    </location>
    <ligand>
        <name>Mg(2+)</name>
        <dbReference type="ChEBI" id="CHEBI:18420"/>
    </ligand>
</feature>
<feature type="binding site" evidence="1">
    <location>
        <position position="193"/>
    </location>
    <ligand>
        <name>Mg(2+)</name>
        <dbReference type="ChEBI" id="CHEBI:18420"/>
    </ligand>
</feature>
<feature type="binding site" evidence="1">
    <location>
        <position position="194"/>
    </location>
    <ligand>
        <name>Mg(2+)</name>
        <dbReference type="ChEBI" id="CHEBI:18420"/>
    </ligand>
</feature>
<feature type="binding site" evidence="1">
    <location>
        <position position="285"/>
    </location>
    <ligand>
        <name>substrate</name>
    </ligand>
</feature>
<feature type="binding site" evidence="1">
    <location>
        <position position="317"/>
    </location>
    <ligand>
        <name>substrate</name>
    </ligand>
</feature>
<feature type="binding site" evidence="1">
    <location>
        <position position="369"/>
    </location>
    <ligand>
        <name>substrate</name>
    </ligand>
</feature>
<feature type="site" description="Transition state stabilizer" evidence="1">
    <location>
        <position position="324"/>
    </location>
</feature>
<feature type="modified residue" description="N6,N6,N6-trimethyllysine" evidence="1">
    <location>
        <position position="4"/>
    </location>
</feature>
<feature type="modified residue" description="N6-carboxylysine" evidence="1">
    <location>
        <position position="191"/>
    </location>
</feature>
<feature type="disulfide bond" description="Interchain; in linked form" evidence="1">
    <location>
        <position position="237"/>
    </location>
</feature>
<feature type="non-terminal residue">
    <location>
        <position position="1"/>
    </location>
</feature>
<feature type="non-terminal residue">
    <location>
        <position position="459"/>
    </location>
</feature>
<evidence type="ECO:0000255" key="1">
    <source>
        <dbReference type="HAMAP-Rule" id="MF_01338"/>
    </source>
</evidence>
<sequence>VGFKAGVKDYKLTYYTPDYETKDTDILAAFRVTPQPGVPPEEAGAAVAAESSTGTWTTVWTDGLTSLDRYKGRCYHIEPVAGEESQFIAYVAYPLDLFEEGSVTNMFTSIVGNVFGFKALRALRLEDLRIPTAYVKTFQGPPHGIQVERDKLNKYGRPLLGCTIKPKLGLSAKNYGRAVYECLRGGLDFTKDDENVNSQPFMRWRDRFLFCAEAIYKAQAETGEIKGHYLNATAGTCEDMMKRAVFARELGVPIVMHDYLTGGFTANTSLAHYCRDNGLLLHIHRAMHAVIDRQKNHGMHFRVLAKALRMSGGDHIHAGTVVGKLEGEREITLGFVDLLRDDFVEKDRSRGIYFTQDWVSMPGVLPVASGGIHVWHMPALTEIFGDDSVLQFGGGTLGHPWGNAPGAVANRVALEACVQARNEGRDLAREGNEIIREASKWSPELAAACEVWKEIKFEF</sequence>
<organism>
    <name type="scientific">Morus alba</name>
    <name type="common">White mulberry</name>
    <dbReference type="NCBI Taxonomy" id="3498"/>
    <lineage>
        <taxon>Eukaryota</taxon>
        <taxon>Viridiplantae</taxon>
        <taxon>Streptophyta</taxon>
        <taxon>Embryophyta</taxon>
        <taxon>Tracheophyta</taxon>
        <taxon>Spermatophyta</taxon>
        <taxon>Magnoliopsida</taxon>
        <taxon>eudicotyledons</taxon>
        <taxon>Gunneridae</taxon>
        <taxon>Pentapetalae</taxon>
        <taxon>rosids</taxon>
        <taxon>fabids</taxon>
        <taxon>Rosales</taxon>
        <taxon>Moraceae</taxon>
        <taxon>Moreae</taxon>
        <taxon>Morus</taxon>
    </lineage>
</organism>
<dbReference type="EC" id="4.1.1.39" evidence="1"/>
<dbReference type="EMBL" id="L01933">
    <property type="protein sequence ID" value="AAA84460.2"/>
    <property type="molecule type" value="Genomic_DNA"/>
</dbReference>
<dbReference type="PIR" id="T01644">
    <property type="entry name" value="T01644"/>
</dbReference>
<dbReference type="SMR" id="P28431"/>
<dbReference type="GO" id="GO:0009507">
    <property type="term" value="C:chloroplast"/>
    <property type="evidence" value="ECO:0007669"/>
    <property type="project" value="UniProtKB-SubCell"/>
</dbReference>
<dbReference type="GO" id="GO:0000287">
    <property type="term" value="F:magnesium ion binding"/>
    <property type="evidence" value="ECO:0007669"/>
    <property type="project" value="InterPro"/>
</dbReference>
<dbReference type="GO" id="GO:0004497">
    <property type="term" value="F:monooxygenase activity"/>
    <property type="evidence" value="ECO:0007669"/>
    <property type="project" value="UniProtKB-KW"/>
</dbReference>
<dbReference type="GO" id="GO:0016984">
    <property type="term" value="F:ribulose-bisphosphate carboxylase activity"/>
    <property type="evidence" value="ECO:0007669"/>
    <property type="project" value="UniProtKB-EC"/>
</dbReference>
<dbReference type="GO" id="GO:0009853">
    <property type="term" value="P:photorespiration"/>
    <property type="evidence" value="ECO:0007669"/>
    <property type="project" value="UniProtKB-KW"/>
</dbReference>
<dbReference type="GO" id="GO:0019253">
    <property type="term" value="P:reductive pentose-phosphate cycle"/>
    <property type="evidence" value="ECO:0007669"/>
    <property type="project" value="UniProtKB-KW"/>
</dbReference>
<dbReference type="CDD" id="cd08212">
    <property type="entry name" value="RuBisCO_large_I"/>
    <property type="match status" value="1"/>
</dbReference>
<dbReference type="FunFam" id="3.20.20.110:FF:000001">
    <property type="entry name" value="Ribulose bisphosphate carboxylase large chain"/>
    <property type="match status" value="1"/>
</dbReference>
<dbReference type="FunFam" id="3.30.70.150:FF:000001">
    <property type="entry name" value="Ribulose bisphosphate carboxylase large chain"/>
    <property type="match status" value="1"/>
</dbReference>
<dbReference type="Gene3D" id="3.20.20.110">
    <property type="entry name" value="Ribulose bisphosphate carboxylase, large subunit, C-terminal domain"/>
    <property type="match status" value="1"/>
</dbReference>
<dbReference type="Gene3D" id="3.30.70.150">
    <property type="entry name" value="RuBisCO large subunit, N-terminal domain"/>
    <property type="match status" value="1"/>
</dbReference>
<dbReference type="HAMAP" id="MF_01338">
    <property type="entry name" value="RuBisCO_L_type1"/>
    <property type="match status" value="1"/>
</dbReference>
<dbReference type="InterPro" id="IPR033966">
    <property type="entry name" value="RuBisCO"/>
</dbReference>
<dbReference type="InterPro" id="IPR020878">
    <property type="entry name" value="RuBisCo_large_chain_AS"/>
</dbReference>
<dbReference type="InterPro" id="IPR000685">
    <property type="entry name" value="RuBisCO_lsu_C"/>
</dbReference>
<dbReference type="InterPro" id="IPR036376">
    <property type="entry name" value="RuBisCO_lsu_C_sf"/>
</dbReference>
<dbReference type="InterPro" id="IPR017443">
    <property type="entry name" value="RuBisCO_lsu_fd_N"/>
</dbReference>
<dbReference type="InterPro" id="IPR036422">
    <property type="entry name" value="RuBisCO_lsu_N_sf"/>
</dbReference>
<dbReference type="InterPro" id="IPR020888">
    <property type="entry name" value="RuBisCO_lsuI"/>
</dbReference>
<dbReference type="NCBIfam" id="NF003252">
    <property type="entry name" value="PRK04208.1"/>
    <property type="match status" value="1"/>
</dbReference>
<dbReference type="PANTHER" id="PTHR42704">
    <property type="entry name" value="RIBULOSE BISPHOSPHATE CARBOXYLASE"/>
    <property type="match status" value="1"/>
</dbReference>
<dbReference type="PANTHER" id="PTHR42704:SF15">
    <property type="entry name" value="RIBULOSE BISPHOSPHATE CARBOXYLASE LARGE CHAIN"/>
    <property type="match status" value="1"/>
</dbReference>
<dbReference type="Pfam" id="PF00016">
    <property type="entry name" value="RuBisCO_large"/>
    <property type="match status" value="1"/>
</dbReference>
<dbReference type="Pfam" id="PF02788">
    <property type="entry name" value="RuBisCO_large_N"/>
    <property type="match status" value="1"/>
</dbReference>
<dbReference type="SFLD" id="SFLDG01052">
    <property type="entry name" value="RuBisCO"/>
    <property type="match status" value="1"/>
</dbReference>
<dbReference type="SFLD" id="SFLDS00014">
    <property type="entry name" value="RuBisCO"/>
    <property type="match status" value="1"/>
</dbReference>
<dbReference type="SFLD" id="SFLDG00301">
    <property type="entry name" value="RuBisCO-like_proteins"/>
    <property type="match status" value="1"/>
</dbReference>
<dbReference type="SUPFAM" id="SSF51649">
    <property type="entry name" value="RuBisCo, C-terminal domain"/>
    <property type="match status" value="1"/>
</dbReference>
<dbReference type="SUPFAM" id="SSF54966">
    <property type="entry name" value="RuBisCO, large subunit, small (N-terminal) domain"/>
    <property type="match status" value="1"/>
</dbReference>
<dbReference type="PROSITE" id="PS00157">
    <property type="entry name" value="RUBISCO_LARGE"/>
    <property type="match status" value="1"/>
</dbReference>
<name>RBL_MORAL</name>
<accession>P28431</accession>
<geneLocation type="chloroplast"/>
<proteinExistence type="inferred from homology"/>
<reference key="1">
    <citation type="journal article" date="1990" name="Proc. Natl. Acad. Sci. U.S.A.">
        <title>rbcL sequence divergence and phylogenetic relationships in Saxifragaceae sensu lato.</title>
        <authorList>
            <person name="Soltis D.E."/>
            <person name="Soltis P.S."/>
            <person name="Clegg M.T."/>
            <person name="Durbin M."/>
        </authorList>
    </citation>
    <scope>NUCLEOTIDE SEQUENCE [GENOMIC DNA]</scope>
</reference>
<reference key="2">
    <citation type="journal article" date="1992" name="Science">
        <title>Carnivorous plants: phylogeny and structural evolution.</title>
        <authorList>
            <person name="Albert V.A."/>
            <person name="Williams S.E."/>
            <person name="Chase M.W."/>
        </authorList>
    </citation>
    <scope>NUCLEOTIDE SEQUENCE [GENOMIC DNA]</scope>
</reference>
<protein>
    <recommendedName>
        <fullName evidence="1">Ribulose bisphosphate carboxylase large chain</fullName>
        <shortName evidence="1">RuBisCO large subunit</shortName>
        <ecNumber evidence="1">4.1.1.39</ecNumber>
    </recommendedName>
</protein>
<comment type="function">
    <text evidence="1">RuBisCO catalyzes two reactions: the carboxylation of D-ribulose 1,5-bisphosphate, the primary event in carbon dioxide fixation, as well as the oxidative fragmentation of the pentose substrate in the photorespiration process. Both reactions occur simultaneously and in competition at the same active site.</text>
</comment>
<comment type="catalytic activity">
    <reaction evidence="1">
        <text>2 (2R)-3-phosphoglycerate + 2 H(+) = D-ribulose 1,5-bisphosphate + CO2 + H2O</text>
        <dbReference type="Rhea" id="RHEA:23124"/>
        <dbReference type="ChEBI" id="CHEBI:15377"/>
        <dbReference type="ChEBI" id="CHEBI:15378"/>
        <dbReference type="ChEBI" id="CHEBI:16526"/>
        <dbReference type="ChEBI" id="CHEBI:57870"/>
        <dbReference type="ChEBI" id="CHEBI:58272"/>
        <dbReference type="EC" id="4.1.1.39"/>
    </reaction>
</comment>
<comment type="catalytic activity">
    <reaction evidence="1">
        <text>D-ribulose 1,5-bisphosphate + O2 = 2-phosphoglycolate + (2R)-3-phosphoglycerate + 2 H(+)</text>
        <dbReference type="Rhea" id="RHEA:36631"/>
        <dbReference type="ChEBI" id="CHEBI:15378"/>
        <dbReference type="ChEBI" id="CHEBI:15379"/>
        <dbReference type="ChEBI" id="CHEBI:57870"/>
        <dbReference type="ChEBI" id="CHEBI:58033"/>
        <dbReference type="ChEBI" id="CHEBI:58272"/>
    </reaction>
</comment>
<comment type="cofactor">
    <cofactor evidence="1">
        <name>Mg(2+)</name>
        <dbReference type="ChEBI" id="CHEBI:18420"/>
    </cofactor>
    <text evidence="1">Binds 1 Mg(2+) ion per subunit.</text>
</comment>
<comment type="subunit">
    <text evidence="1">Heterohexadecamer of 8 large chains and 8 small chains; disulfide-linked. The disulfide link is formed within the large subunit homodimers.</text>
</comment>
<comment type="subcellular location">
    <subcellularLocation>
        <location>Plastid</location>
        <location>Chloroplast</location>
    </subcellularLocation>
</comment>
<comment type="PTM">
    <text evidence="1">The disulfide bond which can form in the large chain dimeric partners within the hexadecamer appears to be associated with oxidative stress and protein turnover.</text>
</comment>
<comment type="miscellaneous">
    <text evidence="1">The basic functional RuBisCO is composed of a large chain homodimer in a 'head-to-tail' conformation. In form I RuBisCO this homodimer is arranged in a barrel-like tetramer with the small subunits forming a tetrameric 'cap' on each end of the 'barrel'.</text>
</comment>
<comment type="similarity">
    <text evidence="1">Belongs to the RuBisCO large chain family. Type I subfamily.</text>
</comment>